<feature type="chain" id="PRO_0000361868" description="Cytoskeleton protein RodZ">
    <location>
        <begin position="1"/>
        <end position="338"/>
    </location>
</feature>
<feature type="topological domain" description="Cytoplasmic" evidence="1">
    <location>
        <begin position="1"/>
        <end position="111"/>
    </location>
</feature>
<feature type="transmembrane region" description="Helical; Signal-anchor for type II membrane protein" evidence="1">
    <location>
        <begin position="112"/>
        <end position="132"/>
    </location>
</feature>
<feature type="topological domain" description="Periplasmic" evidence="1">
    <location>
        <begin position="133"/>
        <end position="338"/>
    </location>
</feature>
<feature type="domain" description="HTH cro/C1-type" evidence="1">
    <location>
        <begin position="19"/>
        <end position="79"/>
    </location>
</feature>
<feature type="DNA-binding region" description="H-T-H motif" evidence="1">
    <location>
        <begin position="30"/>
        <end position="49"/>
    </location>
</feature>
<feature type="region of interest" description="Disordered" evidence="2">
    <location>
        <begin position="151"/>
        <end position="253"/>
    </location>
</feature>
<feature type="compositionally biased region" description="Polar residues" evidence="2">
    <location>
        <begin position="151"/>
        <end position="163"/>
    </location>
</feature>
<feature type="compositionally biased region" description="Polar residues" evidence="2">
    <location>
        <begin position="180"/>
        <end position="195"/>
    </location>
</feature>
<feature type="compositionally biased region" description="Low complexity" evidence="2">
    <location>
        <begin position="196"/>
        <end position="209"/>
    </location>
</feature>
<feature type="compositionally biased region" description="Polar residues" evidence="2">
    <location>
        <begin position="210"/>
        <end position="241"/>
    </location>
</feature>
<organism>
    <name type="scientific">Yersinia enterocolitica serotype O:8 / biotype 1B (strain NCTC 13174 / 8081)</name>
    <dbReference type="NCBI Taxonomy" id="393305"/>
    <lineage>
        <taxon>Bacteria</taxon>
        <taxon>Pseudomonadati</taxon>
        <taxon>Pseudomonadota</taxon>
        <taxon>Gammaproteobacteria</taxon>
        <taxon>Enterobacterales</taxon>
        <taxon>Yersiniaceae</taxon>
        <taxon>Yersinia</taxon>
    </lineage>
</organism>
<proteinExistence type="inferred from homology"/>
<protein>
    <recommendedName>
        <fullName evidence="1">Cytoskeleton protein RodZ</fullName>
    </recommendedName>
</protein>
<keyword id="KW-0997">Cell inner membrane</keyword>
<keyword id="KW-1003">Cell membrane</keyword>
<keyword id="KW-0133">Cell shape</keyword>
<keyword id="KW-0238">DNA-binding</keyword>
<keyword id="KW-0472">Membrane</keyword>
<keyword id="KW-0735">Signal-anchor</keyword>
<keyword id="KW-0812">Transmembrane</keyword>
<keyword id="KW-1133">Transmembrane helix</keyword>
<name>RODZ_YERE8</name>
<dbReference type="EMBL" id="AM286415">
    <property type="protein sequence ID" value="CAL11169.1"/>
    <property type="status" value="ALT_INIT"/>
    <property type="molecule type" value="Genomic_DNA"/>
</dbReference>
<dbReference type="RefSeq" id="WP_042661345.1">
    <property type="nucleotide sequence ID" value="NC_008800.1"/>
</dbReference>
<dbReference type="RefSeq" id="YP_001005404.1">
    <property type="nucleotide sequence ID" value="NC_008800.1"/>
</dbReference>
<dbReference type="SMR" id="A1JKS1"/>
<dbReference type="KEGG" id="yen:YE1072"/>
<dbReference type="PATRIC" id="fig|393305.7.peg.1169"/>
<dbReference type="eggNOG" id="COG1426">
    <property type="taxonomic scope" value="Bacteria"/>
</dbReference>
<dbReference type="HOGENOM" id="CLU_047530_3_1_6"/>
<dbReference type="OrthoDB" id="9790252at2"/>
<dbReference type="Proteomes" id="UP000000642">
    <property type="component" value="Chromosome"/>
</dbReference>
<dbReference type="GO" id="GO:0005886">
    <property type="term" value="C:plasma membrane"/>
    <property type="evidence" value="ECO:0007669"/>
    <property type="project" value="UniProtKB-SubCell"/>
</dbReference>
<dbReference type="GO" id="GO:0003677">
    <property type="term" value="F:DNA binding"/>
    <property type="evidence" value="ECO:0007669"/>
    <property type="project" value="UniProtKB-KW"/>
</dbReference>
<dbReference type="GO" id="GO:0008360">
    <property type="term" value="P:regulation of cell shape"/>
    <property type="evidence" value="ECO:0007669"/>
    <property type="project" value="UniProtKB-UniRule"/>
</dbReference>
<dbReference type="CDD" id="cd00093">
    <property type="entry name" value="HTH_XRE"/>
    <property type="match status" value="1"/>
</dbReference>
<dbReference type="Gene3D" id="1.10.260.40">
    <property type="entry name" value="lambda repressor-like DNA-binding domains"/>
    <property type="match status" value="1"/>
</dbReference>
<dbReference type="HAMAP" id="MF_02017">
    <property type="entry name" value="RodZ"/>
    <property type="match status" value="1"/>
</dbReference>
<dbReference type="InterPro" id="IPR050400">
    <property type="entry name" value="Bact_Cytoskel_RodZ"/>
</dbReference>
<dbReference type="InterPro" id="IPR001387">
    <property type="entry name" value="Cro/C1-type_HTH"/>
</dbReference>
<dbReference type="InterPro" id="IPR010982">
    <property type="entry name" value="Lambda_DNA-bd_dom_sf"/>
</dbReference>
<dbReference type="InterPro" id="IPR023690">
    <property type="entry name" value="RodZ"/>
</dbReference>
<dbReference type="InterPro" id="IPR025194">
    <property type="entry name" value="RodZ-like_C"/>
</dbReference>
<dbReference type="NCBIfam" id="NF008109">
    <property type="entry name" value="PRK10856.1"/>
    <property type="match status" value="1"/>
</dbReference>
<dbReference type="PANTHER" id="PTHR34475">
    <property type="match status" value="1"/>
</dbReference>
<dbReference type="PANTHER" id="PTHR34475:SF1">
    <property type="entry name" value="CYTOSKELETON PROTEIN RODZ"/>
    <property type="match status" value="1"/>
</dbReference>
<dbReference type="Pfam" id="PF13413">
    <property type="entry name" value="HTH_25"/>
    <property type="match status" value="1"/>
</dbReference>
<dbReference type="Pfam" id="PF13464">
    <property type="entry name" value="RodZ_C"/>
    <property type="match status" value="1"/>
</dbReference>
<dbReference type="SMART" id="SM00530">
    <property type="entry name" value="HTH_XRE"/>
    <property type="match status" value="1"/>
</dbReference>
<dbReference type="SUPFAM" id="SSF47413">
    <property type="entry name" value="lambda repressor-like DNA-binding domains"/>
    <property type="match status" value="1"/>
</dbReference>
<dbReference type="PROSITE" id="PS50943">
    <property type="entry name" value="HTH_CROC1"/>
    <property type="match status" value="1"/>
</dbReference>
<sequence length="338" mass="35615">MNTEASQDQTVPETTGVRLRQAREALGLTQQMVAERLCLKVSTIRDIEEDKAQANLASTFHRGYIRSYAKLVHLPEDELLPMLAKQAPIRAAKVAPMQSFSLGKKHKKRDGWLMSFTWLIVLVVLGLTGAWWWQNHQAQQAEIVTMADQSSAQLSQNGGQSVPLSDDNSDPANPVDTQAPVANSQPSTPTENGTVPATSSAAPADTANNGVNTTAPQGTTSAESAVVSPSQAPLPSVSTAQPPLPTADAGVTGTASSADSLVMNFTADCWLQVVDASGKTLFSGIQKGGATLNLSGKAPYKLTIGAPGALTITYQGNPVDLSKFIKANRVARLTVGVE</sequence>
<evidence type="ECO:0000255" key="1">
    <source>
        <dbReference type="HAMAP-Rule" id="MF_02017"/>
    </source>
</evidence>
<evidence type="ECO:0000256" key="2">
    <source>
        <dbReference type="SAM" id="MobiDB-lite"/>
    </source>
</evidence>
<evidence type="ECO:0000305" key="3"/>
<gene>
    <name evidence="1" type="primary">rodZ</name>
    <name type="ordered locus">YE1072</name>
</gene>
<reference key="1">
    <citation type="journal article" date="2006" name="PLoS Genet.">
        <title>The complete genome sequence and comparative genome analysis of the high pathogenicity Yersinia enterocolitica strain 8081.</title>
        <authorList>
            <person name="Thomson N.R."/>
            <person name="Howard S."/>
            <person name="Wren B.W."/>
            <person name="Holden M.T.G."/>
            <person name="Crossman L."/>
            <person name="Challis G.L."/>
            <person name="Churcher C."/>
            <person name="Mungall K."/>
            <person name="Brooks K."/>
            <person name="Chillingworth T."/>
            <person name="Feltwell T."/>
            <person name="Abdellah Z."/>
            <person name="Hauser H."/>
            <person name="Jagels K."/>
            <person name="Maddison M."/>
            <person name="Moule S."/>
            <person name="Sanders M."/>
            <person name="Whitehead S."/>
            <person name="Quail M.A."/>
            <person name="Dougan G."/>
            <person name="Parkhill J."/>
            <person name="Prentice M.B."/>
        </authorList>
    </citation>
    <scope>NUCLEOTIDE SEQUENCE [LARGE SCALE GENOMIC DNA]</scope>
    <source>
        <strain>NCTC 13174 / 8081</strain>
    </source>
</reference>
<comment type="function">
    <text evidence="1">Cytoskeletal protein that is involved in cell-shape control through regulation of the length of the long axis.</text>
</comment>
<comment type="subcellular location">
    <subcellularLocation>
        <location evidence="1">Cell inner membrane</location>
        <topology evidence="1">Single-pass type II membrane protein</topology>
    </subcellularLocation>
    <text evidence="1">Forms helical filaments along the long axis of the cell.</text>
</comment>
<comment type="domain">
    <text evidence="1">The helix-turn-helix (HTH) motif in the cytoplasmic domain of the N-terminus is involved in the formation of spirals to maintain the rigid rod shape. As this protein is anchored in the cytoplasmic membrane, the HTH motif may contribute to protein-protein interactions to form the RodZ helix, which is localized beneath the cytoplasmic membrane. The C-terminal domain may be critical for determination of the rod shape by probably interacting with enzymes required for synthesis of the peptidoglycan layer, including PBPs in the periplasm.</text>
</comment>
<comment type="similarity">
    <text evidence="1">Belongs to the RodZ family.</text>
</comment>
<comment type="sequence caution" evidence="3">
    <conflict type="erroneous initiation">
        <sequence resource="EMBL-CDS" id="CAL11169"/>
    </conflict>
</comment>
<accession>A1JKS1</accession>